<organism>
    <name type="scientific">Ralstonia nicotianae (strain ATCC BAA-1114 / GMI1000)</name>
    <name type="common">Ralstonia solanacearum</name>
    <dbReference type="NCBI Taxonomy" id="267608"/>
    <lineage>
        <taxon>Bacteria</taxon>
        <taxon>Pseudomonadati</taxon>
        <taxon>Pseudomonadota</taxon>
        <taxon>Betaproteobacteria</taxon>
        <taxon>Burkholderiales</taxon>
        <taxon>Burkholderiaceae</taxon>
        <taxon>Ralstonia</taxon>
        <taxon>Ralstonia solanacearum species complex</taxon>
    </lineage>
</organism>
<feature type="chain" id="PRO_0000165429" description="S-adenosylmethionine:tRNA ribosyltransferase-isomerase">
    <location>
        <begin position="1"/>
        <end position="356"/>
    </location>
</feature>
<dbReference type="EC" id="2.4.99.17" evidence="1"/>
<dbReference type="EMBL" id="AL646052">
    <property type="protein sequence ID" value="CAD16419.1"/>
    <property type="status" value="ALT_INIT"/>
    <property type="molecule type" value="Genomic_DNA"/>
</dbReference>
<dbReference type="RefSeq" id="WP_011002619.1">
    <property type="nucleotide sequence ID" value="NC_003295.1"/>
</dbReference>
<dbReference type="SMR" id="Q8XVW5"/>
<dbReference type="STRING" id="267608.RSc2712"/>
<dbReference type="EnsemblBacteria" id="CAD16419">
    <property type="protein sequence ID" value="CAD16419"/>
    <property type="gene ID" value="RSc2712"/>
</dbReference>
<dbReference type="KEGG" id="rso:RSc2712"/>
<dbReference type="eggNOG" id="COG0809">
    <property type="taxonomic scope" value="Bacteria"/>
</dbReference>
<dbReference type="HOGENOM" id="CLU_039110_1_0_4"/>
<dbReference type="UniPathway" id="UPA00392"/>
<dbReference type="Proteomes" id="UP000001436">
    <property type="component" value="Chromosome"/>
</dbReference>
<dbReference type="GO" id="GO:0005737">
    <property type="term" value="C:cytoplasm"/>
    <property type="evidence" value="ECO:0007669"/>
    <property type="project" value="UniProtKB-SubCell"/>
</dbReference>
<dbReference type="GO" id="GO:0051075">
    <property type="term" value="F:S-adenosylmethionine:tRNA ribosyltransferase-isomerase activity"/>
    <property type="evidence" value="ECO:0007669"/>
    <property type="project" value="UniProtKB-EC"/>
</dbReference>
<dbReference type="GO" id="GO:0008616">
    <property type="term" value="P:queuosine biosynthetic process"/>
    <property type="evidence" value="ECO:0007669"/>
    <property type="project" value="UniProtKB-UniRule"/>
</dbReference>
<dbReference type="GO" id="GO:0002099">
    <property type="term" value="P:tRNA wobble guanine modification"/>
    <property type="evidence" value="ECO:0007669"/>
    <property type="project" value="TreeGrafter"/>
</dbReference>
<dbReference type="FunFam" id="3.40.1780.10:FF:000001">
    <property type="entry name" value="S-adenosylmethionine:tRNA ribosyltransferase-isomerase"/>
    <property type="match status" value="1"/>
</dbReference>
<dbReference type="Gene3D" id="2.40.10.240">
    <property type="entry name" value="QueA-like"/>
    <property type="match status" value="1"/>
</dbReference>
<dbReference type="Gene3D" id="3.40.1780.10">
    <property type="entry name" value="QueA-like"/>
    <property type="match status" value="1"/>
</dbReference>
<dbReference type="HAMAP" id="MF_00113">
    <property type="entry name" value="QueA"/>
    <property type="match status" value="1"/>
</dbReference>
<dbReference type="InterPro" id="IPR003699">
    <property type="entry name" value="QueA"/>
</dbReference>
<dbReference type="InterPro" id="IPR042118">
    <property type="entry name" value="QueA_dom1"/>
</dbReference>
<dbReference type="InterPro" id="IPR042119">
    <property type="entry name" value="QueA_dom2"/>
</dbReference>
<dbReference type="InterPro" id="IPR036100">
    <property type="entry name" value="QueA_sf"/>
</dbReference>
<dbReference type="NCBIfam" id="NF001140">
    <property type="entry name" value="PRK00147.1"/>
    <property type="match status" value="1"/>
</dbReference>
<dbReference type="NCBIfam" id="TIGR00113">
    <property type="entry name" value="queA"/>
    <property type="match status" value="1"/>
</dbReference>
<dbReference type="PANTHER" id="PTHR30307">
    <property type="entry name" value="S-ADENOSYLMETHIONINE:TRNA RIBOSYLTRANSFERASE-ISOMERASE"/>
    <property type="match status" value="1"/>
</dbReference>
<dbReference type="PANTHER" id="PTHR30307:SF0">
    <property type="entry name" value="S-ADENOSYLMETHIONINE:TRNA RIBOSYLTRANSFERASE-ISOMERASE"/>
    <property type="match status" value="1"/>
</dbReference>
<dbReference type="Pfam" id="PF02547">
    <property type="entry name" value="Queuosine_synth"/>
    <property type="match status" value="1"/>
</dbReference>
<dbReference type="SUPFAM" id="SSF111337">
    <property type="entry name" value="QueA-like"/>
    <property type="match status" value="1"/>
</dbReference>
<keyword id="KW-0963">Cytoplasm</keyword>
<keyword id="KW-0671">Queuosine biosynthesis</keyword>
<keyword id="KW-1185">Reference proteome</keyword>
<keyword id="KW-0949">S-adenosyl-L-methionine</keyword>
<keyword id="KW-0808">Transferase</keyword>
<evidence type="ECO:0000255" key="1">
    <source>
        <dbReference type="HAMAP-Rule" id="MF_00113"/>
    </source>
</evidence>
<evidence type="ECO:0000305" key="2"/>
<comment type="function">
    <text evidence="1">Transfers and isomerizes the ribose moiety from AdoMet to the 7-aminomethyl group of 7-deazaguanine (preQ1-tRNA) to give epoxyqueuosine (oQ-tRNA).</text>
</comment>
<comment type="catalytic activity">
    <reaction evidence="1">
        <text>7-aminomethyl-7-carbaguanosine(34) in tRNA + S-adenosyl-L-methionine = epoxyqueuosine(34) in tRNA + adenine + L-methionine + 2 H(+)</text>
        <dbReference type="Rhea" id="RHEA:32155"/>
        <dbReference type="Rhea" id="RHEA-COMP:10342"/>
        <dbReference type="Rhea" id="RHEA-COMP:18582"/>
        <dbReference type="ChEBI" id="CHEBI:15378"/>
        <dbReference type="ChEBI" id="CHEBI:16708"/>
        <dbReference type="ChEBI" id="CHEBI:57844"/>
        <dbReference type="ChEBI" id="CHEBI:59789"/>
        <dbReference type="ChEBI" id="CHEBI:82833"/>
        <dbReference type="ChEBI" id="CHEBI:194443"/>
        <dbReference type="EC" id="2.4.99.17"/>
    </reaction>
</comment>
<comment type="pathway">
    <text evidence="1">tRNA modification; tRNA-queuosine biosynthesis.</text>
</comment>
<comment type="subunit">
    <text evidence="1">Monomer.</text>
</comment>
<comment type="subcellular location">
    <subcellularLocation>
        <location evidence="1">Cytoplasm</location>
    </subcellularLocation>
</comment>
<comment type="similarity">
    <text evidence="1">Belongs to the QueA family.</text>
</comment>
<comment type="sequence caution" evidence="2">
    <conflict type="erroneous initiation">
        <sequence resource="EMBL-CDS" id="CAD16419"/>
    </conflict>
</comment>
<gene>
    <name evidence="1" type="primary">queA</name>
    <name type="synonym">tsaA</name>
    <name type="ordered locus">RSc2712</name>
    <name type="ORF">RS00010</name>
</gene>
<name>QUEA_RALN1</name>
<sequence length="356" mass="39233">MLTLSDFDFDLPPELIAQTALPDRTASRLLAARHDAQGTHFDDRQFADLVDYLRPGDLLVFNDTRVIKARFFGHKASGGKIEVLVERLLDEHTVLAQIRSSKSPVAGSTLRLADAFDVTVGPRHEPFFTLRFPQPALELIEQYGRLPLPPYIEHTPDSFDETRYQTVYARTPGAVAAPTAGLHFDDALFARLDAMGVRRGFLTLHVGAGTFSPVRVENIAEHRMHSEWYAISPDLAEAIRATRAVGGRIVAVGTTSMRALESAAQPDGTLAAGSGETDIFITPGYRFRLVDALVTNFHLPKSTLLMLVSAFAGLETIRAAYRHAIAQRYRFFSYGDAMFLTRAEPDTQSASPDPSC</sequence>
<protein>
    <recommendedName>
        <fullName evidence="1">S-adenosylmethionine:tRNA ribosyltransferase-isomerase</fullName>
        <ecNumber evidence="1">2.4.99.17</ecNumber>
    </recommendedName>
    <alternativeName>
        <fullName evidence="1">Queuosine biosynthesis protein QueA</fullName>
    </alternativeName>
</protein>
<accession>Q8XVW5</accession>
<proteinExistence type="inferred from homology"/>
<reference key="1">
    <citation type="journal article" date="2002" name="Nature">
        <title>Genome sequence of the plant pathogen Ralstonia solanacearum.</title>
        <authorList>
            <person name="Salanoubat M."/>
            <person name="Genin S."/>
            <person name="Artiguenave F."/>
            <person name="Gouzy J."/>
            <person name="Mangenot S."/>
            <person name="Arlat M."/>
            <person name="Billault A."/>
            <person name="Brottier P."/>
            <person name="Camus J.-C."/>
            <person name="Cattolico L."/>
            <person name="Chandler M."/>
            <person name="Choisne N."/>
            <person name="Claudel-Renard C."/>
            <person name="Cunnac S."/>
            <person name="Demange N."/>
            <person name="Gaspin C."/>
            <person name="Lavie M."/>
            <person name="Moisan A."/>
            <person name="Robert C."/>
            <person name="Saurin W."/>
            <person name="Schiex T."/>
            <person name="Siguier P."/>
            <person name="Thebault P."/>
            <person name="Whalen M."/>
            <person name="Wincker P."/>
            <person name="Levy M."/>
            <person name="Weissenbach J."/>
            <person name="Boucher C.A."/>
        </authorList>
    </citation>
    <scope>NUCLEOTIDE SEQUENCE [LARGE SCALE GENOMIC DNA]</scope>
    <source>
        <strain>ATCC BAA-1114 / GMI1000</strain>
    </source>
</reference>